<dbReference type="EC" id="3.1.-.-" evidence="1 2 4"/>
<dbReference type="EMBL" id="M63489">
    <property type="protein sequence ID" value="AAA22200.1"/>
    <property type="molecule type" value="Genomic_DNA"/>
</dbReference>
<dbReference type="EMBL" id="Y14081">
    <property type="protein sequence ID" value="CAA74481.1"/>
    <property type="molecule type" value="Genomic_DNA"/>
</dbReference>
<dbReference type="EMBL" id="AL009126">
    <property type="protein sequence ID" value="CAB12902.2"/>
    <property type="molecule type" value="Genomic_DNA"/>
</dbReference>
<dbReference type="PIR" id="A39432">
    <property type="entry name" value="A39432"/>
</dbReference>
<dbReference type="RefSeq" id="NP_388943.2">
    <property type="nucleotide sequence ID" value="NC_000964.3"/>
</dbReference>
<dbReference type="RefSeq" id="WP_003244988.1">
    <property type="nucleotide sequence ID" value="NZ_OZ025638.1"/>
</dbReference>
<dbReference type="PDB" id="3U44">
    <property type="method" value="X-ray"/>
    <property type="resolution" value="3.20 A"/>
    <property type="chains" value="B=1-1166"/>
</dbReference>
<dbReference type="PDB" id="3U4Q">
    <property type="method" value="X-ray"/>
    <property type="resolution" value="2.80 A"/>
    <property type="chains" value="B=1-1166"/>
</dbReference>
<dbReference type="PDB" id="4CEH">
    <property type="method" value="X-ray"/>
    <property type="resolution" value="3.24 A"/>
    <property type="chains" value="B=1-1166"/>
</dbReference>
<dbReference type="PDB" id="4CEI">
    <property type="method" value="X-ray"/>
    <property type="resolution" value="2.80 A"/>
    <property type="chains" value="B=1-1166"/>
</dbReference>
<dbReference type="PDB" id="4CEJ">
    <property type="method" value="X-ray"/>
    <property type="resolution" value="3.00 A"/>
    <property type="chains" value="B=1-1166"/>
</dbReference>
<dbReference type="PDBsum" id="3U44"/>
<dbReference type="PDBsum" id="3U4Q"/>
<dbReference type="PDBsum" id="4CEH"/>
<dbReference type="PDBsum" id="4CEI"/>
<dbReference type="PDBsum" id="4CEJ"/>
<dbReference type="SMR" id="P23477"/>
<dbReference type="DIP" id="DIP-60826N"/>
<dbReference type="FunCoup" id="P23477">
    <property type="interactions" value="12"/>
</dbReference>
<dbReference type="IntAct" id="P23477">
    <property type="interactions" value="3"/>
</dbReference>
<dbReference type="STRING" id="224308.BSU10620"/>
<dbReference type="PaxDb" id="224308-BSU10620"/>
<dbReference type="EnsemblBacteria" id="CAB12902">
    <property type="protein sequence ID" value="CAB12902"/>
    <property type="gene ID" value="BSU_10620"/>
</dbReference>
<dbReference type="GeneID" id="936341"/>
<dbReference type="KEGG" id="bsu:BSU10620"/>
<dbReference type="PATRIC" id="fig|224308.179.peg.1142"/>
<dbReference type="eggNOG" id="COG3857">
    <property type="taxonomic scope" value="Bacteria"/>
</dbReference>
<dbReference type="InParanoid" id="P23477"/>
<dbReference type="OrthoDB" id="9758506at2"/>
<dbReference type="PhylomeDB" id="P23477"/>
<dbReference type="BioCyc" id="BSUB:BSU10620-MONOMER"/>
<dbReference type="EvolutionaryTrace" id="P23477"/>
<dbReference type="Proteomes" id="UP000001570">
    <property type="component" value="Chromosome"/>
</dbReference>
<dbReference type="GO" id="GO:0051539">
    <property type="term" value="F:4 iron, 4 sulfur cluster binding"/>
    <property type="evidence" value="ECO:0007669"/>
    <property type="project" value="UniProtKB-KW"/>
</dbReference>
<dbReference type="GO" id="GO:0008409">
    <property type="term" value="F:5'-3' exonuclease activity"/>
    <property type="evidence" value="ECO:0007669"/>
    <property type="project" value="UniProtKB-UniRule"/>
</dbReference>
<dbReference type="GO" id="GO:0005524">
    <property type="term" value="F:ATP binding"/>
    <property type="evidence" value="ECO:0007669"/>
    <property type="project" value="UniProtKB-UniRule"/>
</dbReference>
<dbReference type="GO" id="GO:0003690">
    <property type="term" value="F:double-stranded DNA binding"/>
    <property type="evidence" value="ECO:0007669"/>
    <property type="project" value="UniProtKB-UniRule"/>
</dbReference>
<dbReference type="GO" id="GO:0004386">
    <property type="term" value="F:helicase activity"/>
    <property type="evidence" value="ECO:0007669"/>
    <property type="project" value="UniProtKB-KW"/>
</dbReference>
<dbReference type="GO" id="GO:0046872">
    <property type="term" value="F:metal ion binding"/>
    <property type="evidence" value="ECO:0007669"/>
    <property type="project" value="UniProtKB-KW"/>
</dbReference>
<dbReference type="GO" id="GO:0006310">
    <property type="term" value="P:DNA recombination"/>
    <property type="evidence" value="ECO:0000318"/>
    <property type="project" value="GO_Central"/>
</dbReference>
<dbReference type="GO" id="GO:0000724">
    <property type="term" value="P:double-strand break repair via homologous recombination"/>
    <property type="evidence" value="ECO:0007669"/>
    <property type="project" value="UniProtKB-UniRule"/>
</dbReference>
<dbReference type="FunFam" id="3.90.320.10:FF:000006">
    <property type="entry name" value="ATP-dependent helicase/deoxyribonuclease subunit B"/>
    <property type="match status" value="1"/>
</dbReference>
<dbReference type="Gene3D" id="3.90.320.10">
    <property type="match status" value="1"/>
</dbReference>
<dbReference type="Gene3D" id="6.10.140.1030">
    <property type="match status" value="1"/>
</dbReference>
<dbReference type="Gene3D" id="3.40.50.300">
    <property type="entry name" value="P-loop containing nucleotide triphosphate hydrolases"/>
    <property type="match status" value="3"/>
</dbReference>
<dbReference type="HAMAP" id="MF_01452">
    <property type="entry name" value="AddB_type1"/>
    <property type="match status" value="1"/>
</dbReference>
<dbReference type="InterPro" id="IPR049035">
    <property type="entry name" value="ADDB_N"/>
</dbReference>
<dbReference type="InterPro" id="IPR014140">
    <property type="entry name" value="DNA_helicase_suAddB"/>
</dbReference>
<dbReference type="InterPro" id="IPR014017">
    <property type="entry name" value="DNA_helicase_UvrD-like_C"/>
</dbReference>
<dbReference type="InterPro" id="IPR027417">
    <property type="entry name" value="P-loop_NTPase"/>
</dbReference>
<dbReference type="InterPro" id="IPR011604">
    <property type="entry name" value="PDDEXK-like_dom_sf"/>
</dbReference>
<dbReference type="InterPro" id="IPR038726">
    <property type="entry name" value="PDDEXK_AddAB-type"/>
</dbReference>
<dbReference type="NCBIfam" id="TIGR02773">
    <property type="entry name" value="addB_Gpos"/>
    <property type="match status" value="1"/>
</dbReference>
<dbReference type="PANTHER" id="PTHR30591">
    <property type="entry name" value="RECBCD ENZYME SUBUNIT RECC"/>
    <property type="match status" value="1"/>
</dbReference>
<dbReference type="PANTHER" id="PTHR30591:SF1">
    <property type="entry name" value="RECBCD ENZYME SUBUNIT RECC"/>
    <property type="match status" value="1"/>
</dbReference>
<dbReference type="Pfam" id="PF21445">
    <property type="entry name" value="ADDB_N"/>
    <property type="match status" value="1"/>
</dbReference>
<dbReference type="Pfam" id="PF12705">
    <property type="entry name" value="PDDEXK_1"/>
    <property type="match status" value="1"/>
</dbReference>
<dbReference type="Pfam" id="PF13361">
    <property type="entry name" value="UvrD_C"/>
    <property type="match status" value="1"/>
</dbReference>
<dbReference type="SUPFAM" id="SSF52540">
    <property type="entry name" value="P-loop containing nucleoside triphosphate hydrolases"/>
    <property type="match status" value="1"/>
</dbReference>
<dbReference type="PROSITE" id="PS51198">
    <property type="entry name" value="UVRD_HELICASE_ATP_BIND"/>
    <property type="match status" value="1"/>
</dbReference>
<dbReference type="PROSITE" id="PS51217">
    <property type="entry name" value="UVRD_HELICASE_CTER"/>
    <property type="match status" value="1"/>
</dbReference>
<accession>P23477</accession>
<protein>
    <recommendedName>
        <fullName evidence="1 10">ATP-dependent helicase/deoxyribonuclease subunit B</fullName>
        <ecNumber evidence="1 2 4">3.1.-.-</ecNumber>
    </recommendedName>
    <alternativeName>
        <fullName evidence="1">ATP-dependent helicase/nuclease subunit AddB</fullName>
    </alternativeName>
</protein>
<name>ADDB_BACSU</name>
<evidence type="ECO:0000255" key="1">
    <source>
        <dbReference type="HAMAP-Rule" id="MF_01452"/>
    </source>
</evidence>
<evidence type="ECO:0000269" key="2">
    <source>
    </source>
</evidence>
<evidence type="ECO:0000269" key="3">
    <source>
    </source>
</evidence>
<evidence type="ECO:0000269" key="4">
    <source>
    </source>
</evidence>
<evidence type="ECO:0000269" key="5">
    <source>
    </source>
</evidence>
<evidence type="ECO:0000269" key="6">
    <source>
    </source>
</evidence>
<evidence type="ECO:0000269" key="7">
    <source>
    </source>
</evidence>
<evidence type="ECO:0000269" key="8">
    <source>
    </source>
</evidence>
<evidence type="ECO:0000269" key="9">
    <source>
    </source>
</evidence>
<evidence type="ECO:0000303" key="10">
    <source>
    </source>
</evidence>
<evidence type="ECO:0000303" key="11">
    <source>
    </source>
</evidence>
<evidence type="ECO:0000303" key="12">
    <source>
    </source>
</evidence>
<evidence type="ECO:0000305" key="13"/>
<evidence type="ECO:0000305" key="14">
    <source>
    </source>
</evidence>
<evidence type="ECO:0000312" key="15">
    <source>
        <dbReference type="PDB" id="4CEI"/>
    </source>
</evidence>
<evidence type="ECO:0000312" key="16">
    <source>
        <dbReference type="PDB" id="4CEJ"/>
    </source>
</evidence>
<evidence type="ECO:0007744" key="17">
    <source>
        <dbReference type="PDB" id="3U44"/>
    </source>
</evidence>
<evidence type="ECO:0007744" key="18">
    <source>
        <dbReference type="PDB" id="3U4Q"/>
    </source>
</evidence>
<evidence type="ECO:0007744" key="19">
    <source>
        <dbReference type="PDB" id="4CEH"/>
    </source>
</evidence>
<evidence type="ECO:0007744" key="20">
    <source>
        <dbReference type="PDB" id="4CEI"/>
    </source>
</evidence>
<evidence type="ECO:0007744" key="21">
    <source>
        <dbReference type="PDB" id="4CEJ"/>
    </source>
</evidence>
<evidence type="ECO:0007829" key="22">
    <source>
        <dbReference type="PDB" id="3U44"/>
    </source>
</evidence>
<evidence type="ECO:0007829" key="23">
    <source>
        <dbReference type="PDB" id="3U4Q"/>
    </source>
</evidence>
<evidence type="ECO:0007829" key="24">
    <source>
        <dbReference type="PDB" id="4CEH"/>
    </source>
</evidence>
<evidence type="ECO:0007829" key="25">
    <source>
        <dbReference type="PDB" id="4CEI"/>
    </source>
</evidence>
<evidence type="ECO:0007829" key="26">
    <source>
        <dbReference type="PDB" id="4CEJ"/>
    </source>
</evidence>
<gene>
    <name evidence="1 11 12" type="primary">addB</name>
    <name type="ordered locus">BSU10620</name>
</gene>
<reference key="1">
    <citation type="journal article" date="1991" name="J. Bacteriol.">
        <title>Cloning, sequencing, and expression of Bacillus subtilis genes involved in ATP-dependent nuclease synthesis.</title>
        <authorList>
            <person name="Kooistra J."/>
            <person name="Venema G."/>
        </authorList>
    </citation>
    <scope>NUCLEOTIDE SEQUENCE [GENOMIC DNA]</scope>
    <source>
        <strain>OG1</strain>
    </source>
</reference>
<reference key="2">
    <citation type="journal article" date="1998" name="Microbiology">
        <title>The 172 kb prkA-addAB region from 83 degrees to 97 degrees of the Bacillus subtilis chromosome contains several dysfunctional genes, the glyB marker, many genes encoding transporter proteins, and the ubiquitous hit gene.</title>
        <authorList>
            <person name="Noback M.A."/>
            <person name="Holsappel S."/>
            <person name="Kiewiet R."/>
            <person name="Terpstra P."/>
            <person name="Wambutt R."/>
            <person name="Wedler H."/>
            <person name="Venema G."/>
            <person name="Bron S."/>
        </authorList>
    </citation>
    <scope>NUCLEOTIDE SEQUENCE [GENOMIC DNA]</scope>
    <source>
        <strain>168</strain>
    </source>
</reference>
<reference key="3">
    <citation type="journal article" date="1997" name="Nature">
        <title>The complete genome sequence of the Gram-positive bacterium Bacillus subtilis.</title>
        <authorList>
            <person name="Kunst F."/>
            <person name="Ogasawara N."/>
            <person name="Moszer I."/>
            <person name="Albertini A.M."/>
            <person name="Alloni G."/>
            <person name="Azevedo V."/>
            <person name="Bertero M.G."/>
            <person name="Bessieres P."/>
            <person name="Bolotin A."/>
            <person name="Borchert S."/>
            <person name="Borriss R."/>
            <person name="Boursier L."/>
            <person name="Brans A."/>
            <person name="Braun M."/>
            <person name="Brignell S.C."/>
            <person name="Bron S."/>
            <person name="Brouillet S."/>
            <person name="Bruschi C.V."/>
            <person name="Caldwell B."/>
            <person name="Capuano V."/>
            <person name="Carter N.M."/>
            <person name="Choi S.-K."/>
            <person name="Codani J.-J."/>
            <person name="Connerton I.F."/>
            <person name="Cummings N.J."/>
            <person name="Daniel R.A."/>
            <person name="Denizot F."/>
            <person name="Devine K.M."/>
            <person name="Duesterhoeft A."/>
            <person name="Ehrlich S.D."/>
            <person name="Emmerson P.T."/>
            <person name="Entian K.-D."/>
            <person name="Errington J."/>
            <person name="Fabret C."/>
            <person name="Ferrari E."/>
            <person name="Foulger D."/>
            <person name="Fritz C."/>
            <person name="Fujita M."/>
            <person name="Fujita Y."/>
            <person name="Fuma S."/>
            <person name="Galizzi A."/>
            <person name="Galleron N."/>
            <person name="Ghim S.-Y."/>
            <person name="Glaser P."/>
            <person name="Goffeau A."/>
            <person name="Golightly E.J."/>
            <person name="Grandi G."/>
            <person name="Guiseppi G."/>
            <person name="Guy B.J."/>
            <person name="Haga K."/>
            <person name="Haiech J."/>
            <person name="Harwood C.R."/>
            <person name="Henaut A."/>
            <person name="Hilbert H."/>
            <person name="Holsappel S."/>
            <person name="Hosono S."/>
            <person name="Hullo M.-F."/>
            <person name="Itaya M."/>
            <person name="Jones L.-M."/>
            <person name="Joris B."/>
            <person name="Karamata D."/>
            <person name="Kasahara Y."/>
            <person name="Klaerr-Blanchard M."/>
            <person name="Klein C."/>
            <person name="Kobayashi Y."/>
            <person name="Koetter P."/>
            <person name="Koningstein G."/>
            <person name="Krogh S."/>
            <person name="Kumano M."/>
            <person name="Kurita K."/>
            <person name="Lapidus A."/>
            <person name="Lardinois S."/>
            <person name="Lauber J."/>
            <person name="Lazarevic V."/>
            <person name="Lee S.-M."/>
            <person name="Levine A."/>
            <person name="Liu H."/>
            <person name="Masuda S."/>
            <person name="Mauel C."/>
            <person name="Medigue C."/>
            <person name="Medina N."/>
            <person name="Mellado R.P."/>
            <person name="Mizuno M."/>
            <person name="Moestl D."/>
            <person name="Nakai S."/>
            <person name="Noback M."/>
            <person name="Noone D."/>
            <person name="O'Reilly M."/>
            <person name="Ogawa K."/>
            <person name="Ogiwara A."/>
            <person name="Oudega B."/>
            <person name="Park S.-H."/>
            <person name="Parro V."/>
            <person name="Pohl T.M."/>
            <person name="Portetelle D."/>
            <person name="Porwollik S."/>
            <person name="Prescott A.M."/>
            <person name="Presecan E."/>
            <person name="Pujic P."/>
            <person name="Purnelle B."/>
            <person name="Rapoport G."/>
            <person name="Rey M."/>
            <person name="Reynolds S."/>
            <person name="Rieger M."/>
            <person name="Rivolta C."/>
            <person name="Rocha E."/>
            <person name="Roche B."/>
            <person name="Rose M."/>
            <person name="Sadaie Y."/>
            <person name="Sato T."/>
            <person name="Scanlan E."/>
            <person name="Schleich S."/>
            <person name="Schroeter R."/>
            <person name="Scoffone F."/>
            <person name="Sekiguchi J."/>
            <person name="Sekowska A."/>
            <person name="Seror S.J."/>
            <person name="Serror P."/>
            <person name="Shin B.-S."/>
            <person name="Soldo B."/>
            <person name="Sorokin A."/>
            <person name="Tacconi E."/>
            <person name="Takagi T."/>
            <person name="Takahashi H."/>
            <person name="Takemaru K."/>
            <person name="Takeuchi M."/>
            <person name="Tamakoshi A."/>
            <person name="Tanaka T."/>
            <person name="Terpstra P."/>
            <person name="Tognoni A."/>
            <person name="Tosato V."/>
            <person name="Uchiyama S."/>
            <person name="Vandenbol M."/>
            <person name="Vannier F."/>
            <person name="Vassarotti A."/>
            <person name="Viari A."/>
            <person name="Wambutt R."/>
            <person name="Wedler E."/>
            <person name="Wedler H."/>
            <person name="Weitzenegger T."/>
            <person name="Winters P."/>
            <person name="Wipat A."/>
            <person name="Yamamoto H."/>
            <person name="Yamane K."/>
            <person name="Yasumoto K."/>
            <person name="Yata K."/>
            <person name="Yoshida K."/>
            <person name="Yoshikawa H.-F."/>
            <person name="Zumstein E."/>
            <person name="Yoshikawa H."/>
            <person name="Danchin A."/>
        </authorList>
    </citation>
    <scope>NUCLEOTIDE SEQUENCE [LARGE SCALE GENOMIC DNA]</scope>
    <source>
        <strain>168</strain>
    </source>
</reference>
<reference key="4">
    <citation type="journal article" date="2009" name="Microbiology">
        <title>From a consortium sequence to a unified sequence: the Bacillus subtilis 168 reference genome a decade later.</title>
        <authorList>
            <person name="Barbe V."/>
            <person name="Cruveiller S."/>
            <person name="Kunst F."/>
            <person name="Lenoble P."/>
            <person name="Meurice G."/>
            <person name="Sekowska A."/>
            <person name="Vallenet D."/>
            <person name="Wang T."/>
            <person name="Moszer I."/>
            <person name="Medigue C."/>
            <person name="Danchin A."/>
        </authorList>
    </citation>
    <scope>SEQUENCE REVISION TO 844</scope>
</reference>
<reference key="5">
    <citation type="journal article" date="1993" name="Mol. Microbiol.">
        <title>The Bacillus subtilis addAB genes are fully functional in Escherichia coli.</title>
        <authorList>
            <person name="Kooistra J."/>
            <person name="Haijema B.J."/>
            <person name="Venema G."/>
        </authorList>
    </citation>
    <scope>SUBUNIT</scope>
    <scope>FUNCTION IN E.COLI</scope>
</reference>
<reference key="6">
    <citation type="journal article" date="2000" name="J. Mol. Biol.">
        <title>The Bacillus subtilis AddAB helicase/nuclease is regulated by its cognate Chi sequence in vitro.</title>
        <authorList>
            <person name="Chedin F."/>
            <person name="Ehrlich S.D."/>
            <person name="Kowalczykowski S.C."/>
        </authorList>
    </citation>
    <scope>FUNCTION OF COMPLEX AS AN EXONUCLEASE AND HELICASE</scope>
    <scope>MAGNESIUM COFACTOR</scope>
    <scope>ATP-DEPENDENCE</scope>
</reference>
<reference key="7">
    <citation type="journal article" date="2005" name="J. Cell Biol.">
        <title>Dynamic formation of RecA filaments at DNA double strand break repair centers in live cells.</title>
        <authorList>
            <person name="Kidane D."/>
            <person name="Graumann P.L."/>
        </authorList>
    </citation>
    <scope>RECRUITS RECA TO DNA DOUBLE-STRAND BREAKS</scope>
    <source>
        <strain>168 / YB886 / BG214</strain>
    </source>
</reference>
<reference key="8">
    <citation type="journal article" date="2006" name="J. Bacteriol.">
        <title>Recruitment of Bacillus subtilis RecN to DNA double-strand breaks in the absence of DNA end processing.</title>
        <authorList>
            <person name="Sanchez H."/>
            <person name="Kidane D."/>
            <person name="Castillo Cozar M."/>
            <person name="Graumann P.L."/>
            <person name="Alonso J.C."/>
        </authorList>
    </citation>
    <scope>CHARACTERIZATION</scope>
    <source>
        <strain>168 / YB886 / BG214</strain>
    </source>
</reference>
<reference key="9">
    <citation type="journal article" date="2007" name="J. Mol. Biol.">
        <title>A dual-nuclease mechanism for DNA break processing by AddAB-type helicase-nucleases.</title>
        <authorList>
            <person name="Yeeles J.T.P."/>
            <person name="Dillingham M.S."/>
        </authorList>
    </citation>
    <scope>FUNCTION AS A 5' -&gt; 3' NUCLEASE</scope>
    <scope>MUTAGENESIS OF ASP-961</scope>
</reference>
<reference key="10">
    <citation type="journal article" date="2009" name="J. Biol. Chem.">
        <title>An iron-sulfur cluster is essential for the binding of broken DNA by AddAB-type helicase-nucleases.</title>
        <authorList>
            <person name="Yeeles J.T.P."/>
            <person name="Cammack R."/>
            <person name="Dillingham M.S."/>
        </authorList>
    </citation>
    <scope>COFACTOR</scope>
    <scope>SUBUNIT</scope>
    <scope>DNA-BINDING</scope>
    <scope>MUTAGENESIS OF CYS-801; CYS-1121; CYS-1124 AND CYS-1130</scope>
</reference>
<reference key="11">
    <citation type="journal article" date="2011" name="Nucleic Acids Res.">
        <title>The AddAB helicase-nuclease catalyses rapid and processive DNA unwinding using a single Superfamily 1A motor domain.</title>
        <authorList>
            <person name="Yeeles J.T."/>
            <person name="Gwynn E.J."/>
            <person name="Webb M.R."/>
            <person name="Dillingham M.S."/>
        </authorList>
    </citation>
    <scope>FUNCTION</scope>
    <scope>COFACTOR</scope>
    <scope>BIOPHYSICOCHEMICAL PROPERTIES</scope>
    <scope>SUBUNIT</scope>
    <scope>MUTAGENESIS OF LYS-14 AND ASP-961</scope>
    <scope>DNA-BINDING</scope>
</reference>
<reference evidence="17 18" key="12">
    <citation type="journal article" date="2012" name="EMBO J.">
        <title>Insights into Chi recognition from the structure of an AddAB-type helicase-nuclease complex.</title>
        <authorList>
            <person name="Saikrishnan K."/>
            <person name="Yeeles J.T."/>
            <person name="Gilhooly N.S."/>
            <person name="Krajewski W.W."/>
            <person name="Dillingham M.S."/>
            <person name="Wigley D.B."/>
        </authorList>
    </citation>
    <scope>X-RAY CRYSTALLOGRAPHY (2.80 ANGSTROMS) OF ADDAB IN COMPLEX WITH DS-DNA AND [4FE-4S] CLUSTER</scope>
    <scope>FUNCTION</scope>
    <scope>SUBUNIT</scope>
    <scope>MUTAGENESIS OF ASP-41; GLN-42; THR-44; PHE-68; ARG-70; TRP-73; PHE-210 AND PHE-213</scope>
</reference>
<reference evidence="19 20 21" key="13">
    <citation type="journal article" date="2014" name="Nature">
        <title>Structural basis for translocation by AddAB helicase-nuclease and its arrest at chi sites.</title>
        <authorList>
            <person name="Krajewski W.W."/>
            <person name="Fu X."/>
            <person name="Wilkinson M."/>
            <person name="Cronin N.B."/>
            <person name="Dillingham M.S."/>
            <person name="Wigley D.B."/>
        </authorList>
    </citation>
    <scope>X-RAY CRYSTALLOGRAPHY (2.80 ANGSTROMS) IN COMPLEX WITH DNA SUBSTRATES; [4FE-4S] CLUSTER AND ATP ANALOG</scope>
    <scope>FUNCTION</scope>
    <scope>PROBABLE REACTION MECHANISM</scope>
    <scope>SUBUNIT</scope>
</reference>
<comment type="function">
    <text evidence="2 3 4 6 7 8 9">The heterodimer acts both as a highly processive, ATP-dependent DNA helicase and as an ATP-dependent single-stranded exonuclease, acting in both directions. Recognizes the B.subtilis Chi site (5'-AGCGG-3') which transforms the enzyme from a helicase which degrades both DNA strands to one with only 5' to 3' exonuclease activity. This generates a double-stranded DNA with a protruding 3'-terminated single-stranded tail suitable for the initiation of homologous recombination (Chi fragment). The AddB nuclease domain is not required for Chi fragment generation but for recognition of the Chi site; this subunit has 5' -&gt; 3' nuclease activity but no helicase activity (PubMed:17570399, PubMed:21071401, PubMed:22307084). The helicase activity of isolated AddA acts on 3'-tailed substrate and requires AddB to bind to blunt-ended DNA (PubMed:21071401). RecA thread formation during DNA double-strand break repair requires RecJ or AddAB (PubMed:16385024).</text>
</comment>
<comment type="cofactor">
    <text evidence="2 5 6">At low magnesium concentrations there is no nuclease activity, but helicase activity is unaffected (PubMed:10756102, PubMed:19129187, PubMed:21071401).</text>
</comment>
<comment type="cofactor">
    <cofactor evidence="1 2 5 6">
        <name>Mg(2+)</name>
        <dbReference type="ChEBI" id="CHEBI:18420"/>
    </cofactor>
</comment>
<comment type="cofactor">
    <cofactor evidence="1 5 7 8 17">
        <name>[4Fe-4S] cluster</name>
        <dbReference type="ChEBI" id="CHEBI:49883"/>
    </cofactor>
    <text evidence="1 5 7 8 17 19 20 21">Binds 1 [4Fe-4S] cluster.</text>
</comment>
<comment type="biophysicochemical properties">
    <kinetics>
        <KM evidence="6">6.16 uM for ATP</KM>
        <text evidence="6">kcat for ATP hydrolysis by AddAB is 88 sec(-1), ATPase is strongly stimulated by ssDNA.</text>
    </kinetics>
</comment>
<comment type="subunit">
    <text evidence="1 5 6 7 8 9">Heterodimer of AddA and AddB.</text>
</comment>
<comment type="interaction">
    <interactant intactId="EBI-5247995">
        <id>P23477</id>
    </interactant>
    <interactant intactId="EBI-16098568">
        <id>P23478</id>
        <label>addA</label>
    </interactant>
    <organismsDiffer>false</organismsDiffer>
    <experiments>4</experiments>
</comment>
<comment type="miscellaneous">
    <text>This enzyme is a functional homolog of the RecBCD enzyme; unlike the RecBCD enzyme it degrades both duplex strands symmetrically.</text>
</comment>
<comment type="miscellaneous">
    <text evidence="7">Despite having conserved helicase domains, this subunit does not have helicase activity. The conserved residues of the helicase ATP-binding domain line a 3'-DNA channel in the enzyme and are responsible for Chi site recognition.</text>
</comment>
<comment type="similarity">
    <text evidence="1 13">Belongs to the helicase family. AddB/RexB type 1 subfamily.</text>
</comment>
<organism>
    <name type="scientific">Bacillus subtilis (strain 168)</name>
    <dbReference type="NCBI Taxonomy" id="224308"/>
    <lineage>
        <taxon>Bacteria</taxon>
        <taxon>Bacillati</taxon>
        <taxon>Bacillota</taxon>
        <taxon>Bacilli</taxon>
        <taxon>Bacillales</taxon>
        <taxon>Bacillaceae</taxon>
        <taxon>Bacillus</taxon>
    </lineage>
</organism>
<proteinExistence type="evidence at protein level"/>
<keyword id="KW-0002">3D-structure</keyword>
<keyword id="KW-0004">4Fe-4S</keyword>
<keyword id="KW-0067">ATP-binding</keyword>
<keyword id="KW-0227">DNA damage</keyword>
<keyword id="KW-0234">DNA repair</keyword>
<keyword id="KW-0238">DNA-binding</keyword>
<keyword id="KW-0269">Exonuclease</keyword>
<keyword id="KW-0347">Helicase</keyword>
<keyword id="KW-0378">Hydrolase</keyword>
<keyword id="KW-0408">Iron</keyword>
<keyword id="KW-0411">Iron-sulfur</keyword>
<keyword id="KW-0479">Metal-binding</keyword>
<keyword id="KW-0540">Nuclease</keyword>
<keyword id="KW-0547">Nucleotide-binding</keyword>
<keyword id="KW-1185">Reference proteome</keyword>
<feature type="chain" id="PRO_0000064450" description="ATP-dependent helicase/deoxyribonuclease subunit B">
    <location>
        <begin position="1"/>
        <end position="1166"/>
    </location>
</feature>
<feature type="domain" description="UvrD-like helicase ATP-binding" evidence="1">
    <location>
        <begin position="1"/>
        <end position="278"/>
    </location>
</feature>
<feature type="domain" description="UvrD-like helicase C-terminal" evidence="1">
    <location>
        <begin position="281"/>
        <end position="586"/>
    </location>
</feature>
<feature type="binding site" evidence="15 16">
    <location>
        <position position="10"/>
    </location>
    <ligand>
        <name>ATP</name>
        <dbReference type="ChEBI" id="CHEBI:30616"/>
    </ligand>
</feature>
<feature type="binding site" evidence="15 16">
    <location>
        <position position="11"/>
    </location>
    <ligand>
        <name>ATP</name>
        <dbReference type="ChEBI" id="CHEBI:30616"/>
    </ligand>
</feature>
<feature type="binding site" evidence="14 15 16">
    <location>
        <position position="14"/>
    </location>
    <ligand>
        <name>ATP</name>
        <dbReference type="ChEBI" id="CHEBI:30616"/>
    </ligand>
</feature>
<feature type="binding site" evidence="14 15 16">
    <location>
        <position position="15"/>
    </location>
    <ligand>
        <name>ATP</name>
        <dbReference type="ChEBI" id="CHEBI:30616"/>
    </ligand>
</feature>
<feature type="binding site" evidence="15 16">
    <location>
        <position position="16"/>
    </location>
    <ligand>
        <name>ATP</name>
        <dbReference type="ChEBI" id="CHEBI:30616"/>
    </ligand>
</feature>
<feature type="binding site" evidence="15 16">
    <location>
        <position position="236"/>
    </location>
    <ligand>
        <name>ATP</name>
        <dbReference type="ChEBI" id="CHEBI:30616"/>
    </ligand>
</feature>
<feature type="binding site" evidence="14 15 16">
    <location>
        <position position="283"/>
    </location>
    <ligand>
        <name>ATP</name>
        <dbReference type="ChEBI" id="CHEBI:30616"/>
    </ligand>
</feature>
<feature type="binding site" evidence="1 7 8 17 19 20 21">
    <location>
        <position position="801"/>
    </location>
    <ligand>
        <name>[4Fe-4S] cluster</name>
        <dbReference type="ChEBI" id="CHEBI:49883"/>
    </ligand>
</feature>
<feature type="binding site" evidence="1 7 8 17 19 20 21">
    <location>
        <position position="1121"/>
    </location>
    <ligand>
        <name>[4Fe-4S] cluster</name>
        <dbReference type="ChEBI" id="CHEBI:49883"/>
    </ligand>
</feature>
<feature type="binding site" evidence="1 7 8 17 19 20 21">
    <location>
        <position position="1124"/>
    </location>
    <ligand>
        <name>[4Fe-4S] cluster</name>
        <dbReference type="ChEBI" id="CHEBI:49883"/>
    </ligand>
</feature>
<feature type="binding site" evidence="1 7 8 17 19 20 21">
    <location>
        <position position="1130"/>
    </location>
    <ligand>
        <name>[4Fe-4S] cluster</name>
        <dbReference type="ChEBI" id="CHEBI:49883"/>
    </ligand>
</feature>
<feature type="mutagenesis site" description="No change in AddAB ATPase activity, KM and kcat for ATP hydrolysis are unchanged, helicase rate and processivity are unchanged, enzyme-Chi-DNA complex is 3-fold less stable." evidence="6">
    <original>K</original>
    <variation>A</variation>
    <location>
        <position position="14"/>
    </location>
</feature>
<feature type="mutagenesis site" description="No longer recognizes the Chi sequence nor generates the Chi fragment." evidence="7">
    <original>D</original>
    <variation>A</variation>
    <location>
        <position position="41"/>
    </location>
</feature>
<feature type="mutagenesis site" description="No longer recognizes the Chi sequence nor generates the Chi fragment." evidence="7">
    <original>Q</original>
    <variation>A</variation>
    <location>
        <position position="42"/>
    </location>
</feature>
<feature type="mutagenesis site" description="No longer recognizes the Chi sequence nor generates the Chi fragment." evidence="7">
    <original>T</original>
    <variation>A</variation>
    <location>
        <position position="44"/>
    </location>
</feature>
<feature type="mutagenesis site" description="Reduced recognition of the Chi sequence, reduced generation of the Chi fragment." evidence="7">
    <original>F</original>
    <variation>A</variation>
    <location>
        <position position="68"/>
    </location>
</feature>
<feature type="mutagenesis site" description="No longer recognizes the Chi sequence nor generates the Chi fragment." evidence="7">
    <original>R</original>
    <variation>A</variation>
    <location>
        <position position="70"/>
    </location>
</feature>
<feature type="mutagenesis site" description="Reduced recognition of the Chi sequence, reduced generation of the Chi fragment." evidence="7">
    <original>W</original>
    <variation>A</variation>
    <location>
        <position position="73"/>
    </location>
</feature>
<feature type="mutagenesis site" description="No longer recognizes the Chi sequence nor generates the Chi fragment." evidence="7">
    <original>F</original>
    <variation>A</variation>
    <location>
        <position position="210"/>
    </location>
</feature>
<feature type="mutagenesis site" description="Wild-type Chi fragment generation." evidence="7">
    <original>F</original>
    <variation>A</variation>
    <location>
        <position position="213"/>
    </location>
</feature>
<feature type="mutagenesis site" description="Loss of iron-sulfur group binding, loss of DNA-binding." evidence="5">
    <original>C</original>
    <variation>A</variation>
    <location>
        <position position="801"/>
    </location>
</feature>
<feature type="mutagenesis site" description="Loss of 5'-3' nuclease activity, helicase and DNA-binding are unaltered; when associated with A-1172 in AddA nearly complete loss of bith nuclease activities." evidence="4 6">
    <original>D</original>
    <variation>A</variation>
    <location>
        <position position="961"/>
    </location>
</feature>
<feature type="mutagenesis site" description="Loss of iron-sulfur group binding, loss of DNA-binding." evidence="5">
    <original>C</original>
    <variation>A</variation>
    <location>
        <position position="1121"/>
    </location>
</feature>
<feature type="mutagenesis site" description="Loss of iron-sulfur group binding, loss of DNA-binding." evidence="5">
    <original>C</original>
    <variation>A</variation>
    <location>
        <position position="1124"/>
    </location>
</feature>
<feature type="mutagenesis site" description="Loss of iron-sulfur group binding, loss of DNA-binding." evidence="5">
    <original>C</original>
    <variation>A</variation>
    <location>
        <position position="1130"/>
    </location>
</feature>
<feature type="sequence conflict" description="In Ref. 1; AAA22200 and 2; CAA74481." evidence="13" ref="1 2">
    <original>EQ</original>
    <variation>DE</variation>
    <location>
        <begin position="843"/>
        <end position="844"/>
    </location>
</feature>
<feature type="strand" evidence="23">
    <location>
        <begin position="3"/>
        <end position="8"/>
    </location>
</feature>
<feature type="helix" evidence="23">
    <location>
        <begin position="14"/>
        <end position="28"/>
    </location>
</feature>
<feature type="strand" evidence="23">
    <location>
        <begin position="35"/>
        <end position="38"/>
    </location>
</feature>
<feature type="helix" evidence="23">
    <location>
        <begin position="41"/>
        <end position="43"/>
    </location>
</feature>
<feature type="helix" evidence="23">
    <location>
        <begin position="44"/>
        <end position="51"/>
    </location>
</feature>
<feature type="turn" evidence="25">
    <location>
        <begin position="55"/>
        <end position="57"/>
    </location>
</feature>
<feature type="strand" evidence="23">
    <location>
        <begin position="58"/>
        <end position="66"/>
    </location>
</feature>
<feature type="helix" evidence="23">
    <location>
        <begin position="68"/>
        <end position="79"/>
    </location>
</feature>
<feature type="helix" evidence="23">
    <location>
        <begin position="89"/>
        <end position="102"/>
    </location>
</feature>
<feature type="helix" evidence="23">
    <location>
        <begin position="103"/>
        <end position="106"/>
    </location>
</feature>
<feature type="turn" evidence="23">
    <location>
        <begin position="110"/>
        <end position="113"/>
    </location>
</feature>
<feature type="strand" evidence="23">
    <location>
        <begin position="114"/>
        <end position="116"/>
    </location>
</feature>
<feature type="helix" evidence="23">
    <location>
        <begin position="118"/>
        <end position="132"/>
    </location>
</feature>
<feature type="helix" evidence="23">
    <location>
        <begin position="137"/>
        <end position="144"/>
    </location>
</feature>
<feature type="helix" evidence="23">
    <location>
        <begin position="155"/>
        <end position="175"/>
    </location>
</feature>
<feature type="turn" evidence="23">
    <location>
        <begin position="177"/>
        <end position="179"/>
    </location>
</feature>
<feature type="helix" evidence="23">
    <location>
        <begin position="183"/>
        <end position="185"/>
    </location>
</feature>
<feature type="helix" evidence="23">
    <location>
        <begin position="186"/>
        <end position="193"/>
    </location>
</feature>
<feature type="turn" evidence="22">
    <location>
        <begin position="194"/>
        <end position="196"/>
    </location>
</feature>
<feature type="helix" evidence="23">
    <location>
        <begin position="198"/>
        <end position="200"/>
    </location>
</feature>
<feature type="strand" evidence="23">
    <location>
        <begin position="204"/>
        <end position="207"/>
    </location>
</feature>
<feature type="helix" evidence="23">
    <location>
        <begin position="215"/>
        <end position="227"/>
    </location>
</feature>
<feature type="strand" evidence="23">
    <location>
        <begin position="229"/>
        <end position="236"/>
    </location>
</feature>
<feature type="strand" evidence="23">
    <location>
        <begin position="242"/>
        <end position="244"/>
    </location>
</feature>
<feature type="strand" evidence="24">
    <location>
        <begin position="248"/>
        <end position="251"/>
    </location>
</feature>
<feature type="helix" evidence="23">
    <location>
        <begin position="253"/>
        <end position="268"/>
    </location>
</feature>
<feature type="strand" evidence="23">
    <location>
        <begin position="273"/>
        <end position="278"/>
    </location>
</feature>
<feature type="turn" evidence="23">
    <location>
        <begin position="283"/>
        <end position="286"/>
    </location>
</feature>
<feature type="helix" evidence="23">
    <location>
        <begin position="288"/>
        <end position="295"/>
    </location>
</feature>
<feature type="strand" evidence="23">
    <location>
        <begin position="296"/>
        <end position="298"/>
    </location>
</feature>
<feature type="strand" evidence="23">
    <location>
        <begin position="310"/>
        <end position="319"/>
    </location>
</feature>
<feature type="helix" evidence="23">
    <location>
        <begin position="320"/>
        <end position="336"/>
    </location>
</feature>
<feature type="helix" evidence="23">
    <location>
        <begin position="342"/>
        <end position="344"/>
    </location>
</feature>
<feature type="strand" evidence="23">
    <location>
        <begin position="345"/>
        <end position="350"/>
    </location>
</feature>
<feature type="helix" evidence="23">
    <location>
        <begin position="352"/>
        <end position="354"/>
    </location>
</feature>
<feature type="helix" evidence="23">
    <location>
        <begin position="356"/>
        <end position="365"/>
    </location>
</feature>
<feature type="strand" evidence="23">
    <location>
        <begin position="370"/>
        <end position="374"/>
    </location>
</feature>
<feature type="helix" evidence="23">
    <location>
        <begin position="382"/>
        <end position="395"/>
    </location>
</feature>
<feature type="helix" evidence="23">
    <location>
        <begin position="400"/>
        <end position="407"/>
    </location>
</feature>
<feature type="turn" evidence="23">
    <location>
        <begin position="408"/>
        <end position="410"/>
    </location>
</feature>
<feature type="strand" evidence="23">
    <location>
        <begin position="411"/>
        <end position="413"/>
    </location>
</feature>
<feature type="strand" evidence="23">
    <location>
        <begin position="415"/>
        <end position="417"/>
    </location>
</feature>
<feature type="helix" evidence="23">
    <location>
        <begin position="419"/>
        <end position="436"/>
    </location>
</feature>
<feature type="helix" evidence="23">
    <location>
        <begin position="441"/>
        <end position="444"/>
    </location>
</feature>
<feature type="strand" evidence="26">
    <location>
        <begin position="445"/>
        <end position="447"/>
    </location>
</feature>
<feature type="strand" evidence="25">
    <location>
        <begin position="457"/>
        <end position="459"/>
    </location>
</feature>
<feature type="helix" evidence="23">
    <location>
        <begin position="465"/>
        <end position="494"/>
    </location>
</feature>
<feature type="helix" evidence="23">
    <location>
        <begin position="498"/>
        <end position="511"/>
    </location>
</feature>
<feature type="helix" evidence="23">
    <location>
        <begin position="514"/>
        <end position="527"/>
    </location>
</feature>
<feature type="helix" evidence="23">
    <location>
        <begin position="531"/>
        <end position="554"/>
    </location>
</feature>
<feature type="helix" evidence="23">
    <location>
        <begin position="562"/>
        <end position="575"/>
    </location>
</feature>
<feature type="strand" evidence="23">
    <location>
        <begin position="584"/>
        <end position="586"/>
    </location>
</feature>
<feature type="strand" evidence="23">
    <location>
        <begin position="588"/>
        <end position="595"/>
    </location>
</feature>
<feature type="strand" evidence="23">
    <location>
        <begin position="602"/>
        <end position="607"/>
    </location>
</feature>
<feature type="turn" evidence="23">
    <location>
        <begin position="611"/>
        <end position="616"/>
    </location>
</feature>
<feature type="strand" evidence="23">
    <location>
        <begin position="622"/>
        <end position="624"/>
    </location>
</feature>
<feature type="helix" evidence="23">
    <location>
        <begin position="626"/>
        <end position="634"/>
    </location>
</feature>
<feature type="helix" evidence="23">
    <location>
        <begin position="645"/>
        <end position="658"/>
    </location>
</feature>
<feature type="strand" evidence="23">
    <location>
        <begin position="662"/>
        <end position="672"/>
    </location>
</feature>
<feature type="strand" evidence="23">
    <location>
        <begin position="674"/>
        <end position="676"/>
    </location>
</feature>
<feature type="helix" evidence="23">
    <location>
        <begin position="683"/>
        <end position="691"/>
    </location>
</feature>
<feature type="strand" evidence="23">
    <location>
        <begin position="698"/>
        <end position="700"/>
    </location>
</feature>
<feature type="helix" evidence="23">
    <location>
        <begin position="704"/>
        <end position="706"/>
    </location>
</feature>
<feature type="helix" evidence="23">
    <location>
        <begin position="709"/>
        <end position="712"/>
    </location>
</feature>
<feature type="helix" evidence="25">
    <location>
        <begin position="713"/>
        <end position="715"/>
    </location>
</feature>
<feature type="helix" evidence="23">
    <location>
        <begin position="719"/>
        <end position="734"/>
    </location>
</feature>
<feature type="helix" evidence="23">
    <location>
        <begin position="742"/>
        <end position="750"/>
    </location>
</feature>
<feature type="helix" evidence="23">
    <location>
        <begin position="756"/>
        <end position="763"/>
    </location>
</feature>
<feature type="turn" evidence="23">
    <location>
        <begin position="764"/>
        <end position="767"/>
    </location>
</feature>
<feature type="helix" evidence="23">
    <location>
        <begin position="777"/>
        <end position="783"/>
    </location>
</feature>
<feature type="strand" evidence="23">
    <location>
        <begin position="786"/>
        <end position="788"/>
    </location>
</feature>
<feature type="helix" evidence="23">
    <location>
        <begin position="792"/>
        <end position="800"/>
    </location>
</feature>
<feature type="helix" evidence="23">
    <location>
        <begin position="802"/>
        <end position="808"/>
    </location>
</feature>
<feature type="helix" evidence="23">
    <location>
        <begin position="824"/>
        <end position="843"/>
    </location>
</feature>
<feature type="helix" evidence="23">
    <location>
        <begin position="848"/>
        <end position="850"/>
    </location>
</feature>
<feature type="helix" evidence="23">
    <location>
        <begin position="853"/>
        <end position="867"/>
    </location>
</feature>
<feature type="helix" evidence="23">
    <location>
        <begin position="868"/>
        <end position="870"/>
    </location>
</feature>
<feature type="turn" evidence="23">
    <location>
        <begin position="872"/>
        <end position="874"/>
    </location>
</feature>
<feature type="helix" evidence="23">
    <location>
        <begin position="875"/>
        <end position="878"/>
    </location>
</feature>
<feature type="helix" evidence="23">
    <location>
        <begin position="880"/>
        <end position="904"/>
    </location>
</feature>
<feature type="strand" evidence="23">
    <location>
        <begin position="910"/>
        <end position="924"/>
    </location>
</feature>
<feature type="strand" evidence="23">
    <location>
        <begin position="927"/>
        <end position="931"/>
    </location>
</feature>
<feature type="turn" evidence="23">
    <location>
        <begin position="932"/>
        <end position="934"/>
    </location>
</feature>
<feature type="strand" evidence="23">
    <location>
        <begin position="935"/>
        <end position="951"/>
    </location>
</feature>
<feature type="strand" evidence="23">
    <location>
        <begin position="954"/>
        <end position="966"/>
    </location>
</feature>
<feature type="helix" evidence="23">
    <location>
        <begin position="971"/>
        <end position="975"/>
    </location>
</feature>
<feature type="helix" evidence="23">
    <location>
        <begin position="981"/>
        <end position="997"/>
    </location>
</feature>
<feature type="strand" evidence="23">
    <location>
        <begin position="1001"/>
        <end position="1010"/>
    </location>
</feature>
<feature type="helix" evidence="23">
    <location>
        <begin position="1024"/>
        <end position="1033"/>
    </location>
</feature>
<feature type="strand" evidence="23">
    <location>
        <begin position="1037"/>
        <end position="1042"/>
    </location>
</feature>
<feature type="helix" evidence="23">
    <location>
        <begin position="1045"/>
        <end position="1051"/>
    </location>
</feature>
<feature type="strand" evidence="23">
    <location>
        <begin position="1056"/>
        <end position="1059"/>
    </location>
</feature>
<feature type="strand" evidence="23">
    <location>
        <begin position="1061"/>
        <end position="1064"/>
    </location>
</feature>
<feature type="strand" evidence="25">
    <location>
        <begin position="1071"/>
        <end position="1073"/>
    </location>
</feature>
<feature type="helix" evidence="23">
    <location>
        <begin position="1082"/>
        <end position="1104"/>
    </location>
</feature>
<feature type="strand" evidence="25">
    <location>
        <begin position="1113"/>
        <end position="1115"/>
    </location>
</feature>
<feature type="helix" evidence="25">
    <location>
        <begin position="1121"/>
        <end position="1123"/>
    </location>
</feature>
<feature type="helix" evidence="23">
    <location>
        <begin position="1127"/>
        <end position="1130"/>
    </location>
</feature>
<feature type="strand" evidence="23">
    <location>
        <begin position="1134"/>
        <end position="1136"/>
    </location>
</feature>
<feature type="helix" evidence="23">
    <location>
        <begin position="1149"/>
        <end position="1159"/>
    </location>
</feature>
<sequence length="1166" mass="134645">MGAEFLVGRSGSGKTKLIINSIQDELRRAPFGKPIIFLVPDQMTFLMEYELAKTPDMGGMIRAQVFSFSRLAWRVLQHTGGMSRPFLTSTGVQMLLRKLIEEHKQEFKVYQKASDKSGFTAQVERMLTEFKRYCLEPEDIRRMAESGTASEYRGERVLSEKLHDLSILYQQMEKSLADQYLHSEDYLTLLAEHIPLAEDIKGAHIYVDGFYQFTPQEFRVLEQLMVHAEHITFSLTADKPSYEREPHELELFRMTGKTYYRLHQKAKELNLDITYKELSGTERHTKTPELAHLEAQYEARPAIPYAEKQEALTVMQAANRRAELEGIAREIHALVREKGYRYKDVAILARQPEDYKDMVKEVFADYEIPYFIDGKASMLNHPLIEFIRSSLDVLKGNWRYEAVFRCVKTELLFPLNEPKAKVREQVDQLENYCIAYGIKGDRWTKGDRFQYRRFVSLDDDFAQTDQEIEMENMLNDTRDWIVPPLFQLQKRMKKAKTVQEKAEALYRYLEETDVPLKLDQERQRAEDDGRIIEAQQHQQAWDAVIQLLEEFVEMMGDDEISLDLFQQMIEAGAESLTFSLIPPALDQVFVGNMDLSRMYGTSCTFVLGANDGVLPARPDENGVLSDDDREWLKTIGVELSSGGRERLLDEHFLIYMAFSSPSDRLYVSYPIADAEGKTLLPSMIVKRLEELFPHHKERLLTNEPEQVSDEEQLMYVVNKSVAQSFTASQLRLWTREYDISDVWWSTYNVLMSEQDRLQSKKLFSSLFFRNEVKQLERSVSRQLYGERIQGSVSRMETFNACPFSHFASHGLHLKERQFFKLEAPDIGQLFHSSLKLISDRLREQKLDWRDLTKEQCELFSYDAVERLAPKLQKEILLSSNRHYYVKEKLQKIVTRVSGILSEHAKASGFVPIGLELGFGGKGPLPPLTFQLKNGCTMELVGRIDRVDKAESSKGLLLRIVDYKSSDKGLDLAEVYYGLALQMLTYLDLSITHSADWLGMRATPAGVLYFHIHDPMIQSNLPLGLDEIEQEIFKKFKMKGLLLGDQEVVRLMDTTLQEGRSNIINAGLKKDGSLRSDSAAVGEKEFDLLTKHVRRTFQEAGEQITDGRVSIEPYKMKNKTPCTYCAFKSVCQFDESLEENEYRPLKAEKDKTILEWIKKEADGNEHS</sequence>